<comment type="function">
    <text evidence="1">Assembly factor required for Rieske Fe-S protein RIP1 incorporation into the cytochrome b-c1 (CIII) complex. Functions as a chaperone, binding to this subunit within the mitochondrial matrix and stabilizing it prior to its translocation and insertion into the late CIII dimeric intermediate within the mitochondrial inner membrane. Modulates the mitochondrial matrix zinc pool (By similarity).</text>
</comment>
<comment type="subunit">
    <text evidence="1">Interacts with RIP1.</text>
</comment>
<comment type="subcellular location">
    <subcellularLocation>
        <location evidence="1">Mitochondrion matrix</location>
    </subcellularLocation>
</comment>
<comment type="similarity">
    <text evidence="4">Belongs to the complex I LYR family. MZM1 subfamily.</text>
</comment>
<dbReference type="EMBL" id="CP009812">
    <property type="protein sequence ID" value="ATZ52421.1"/>
    <property type="molecule type" value="Genomic_DNA"/>
</dbReference>
<dbReference type="SMR" id="A6S5Q0"/>
<dbReference type="EnsemblFungi" id="Bcin08g01520.1">
    <property type="protein sequence ID" value="Bcin08p01520.1"/>
    <property type="gene ID" value="Bcin08g01520"/>
</dbReference>
<dbReference type="VEuPathDB" id="FungiDB:Bcin08g01520"/>
<dbReference type="OrthoDB" id="529194at2759"/>
<dbReference type="Proteomes" id="UP000001798">
    <property type="component" value="Chromosome bcin08"/>
</dbReference>
<dbReference type="GO" id="GO:0005759">
    <property type="term" value="C:mitochondrial matrix"/>
    <property type="evidence" value="ECO:0007669"/>
    <property type="project" value="UniProtKB-SubCell"/>
</dbReference>
<dbReference type="GO" id="GO:0044183">
    <property type="term" value="F:protein folding chaperone"/>
    <property type="evidence" value="ECO:0007669"/>
    <property type="project" value="TreeGrafter"/>
</dbReference>
<dbReference type="GO" id="GO:0034551">
    <property type="term" value="P:mitochondrial respiratory chain complex III assembly"/>
    <property type="evidence" value="ECO:0007669"/>
    <property type="project" value="InterPro"/>
</dbReference>
<dbReference type="CDD" id="cd20267">
    <property type="entry name" value="Complex1_LYR_LYRM7"/>
    <property type="match status" value="1"/>
</dbReference>
<dbReference type="InterPro" id="IPR045298">
    <property type="entry name" value="Complex1_LYR_LYRM7"/>
</dbReference>
<dbReference type="InterPro" id="IPR050435">
    <property type="entry name" value="MZM1/LYRM7"/>
</dbReference>
<dbReference type="PANTHER" id="PTHR46749">
    <property type="entry name" value="COMPLEX III ASSEMBLY FACTOR LYRM7"/>
    <property type="match status" value="1"/>
</dbReference>
<dbReference type="PANTHER" id="PTHR46749:SF1">
    <property type="entry name" value="COMPLEX III ASSEMBLY FACTOR LYRM7"/>
    <property type="match status" value="1"/>
</dbReference>
<feature type="transit peptide" description="Mitochondrion" evidence="2">
    <location>
        <begin position="1"/>
        <end status="unknown"/>
    </location>
</feature>
<feature type="chain" id="PRO_0000405487" description="Mitochondrial zinc maintenance protein 1, mitochondrial">
    <location>
        <begin status="unknown"/>
        <end position="111"/>
    </location>
</feature>
<feature type="region of interest" description="Disordered" evidence="3">
    <location>
        <begin position="88"/>
        <end position="111"/>
    </location>
</feature>
<accession>A6S5Q0</accession>
<accession>A0A384JPL2</accession>
<organism>
    <name type="scientific">Botryotinia fuckeliana (strain B05.10)</name>
    <name type="common">Noble rot fungus</name>
    <name type="synonym">Botrytis cinerea</name>
    <dbReference type="NCBI Taxonomy" id="332648"/>
    <lineage>
        <taxon>Eukaryota</taxon>
        <taxon>Fungi</taxon>
        <taxon>Dikarya</taxon>
        <taxon>Ascomycota</taxon>
        <taxon>Pezizomycotina</taxon>
        <taxon>Leotiomycetes</taxon>
        <taxon>Helotiales</taxon>
        <taxon>Sclerotiniaceae</taxon>
        <taxon>Botrytis</taxon>
    </lineage>
</organism>
<gene>
    <name type="primary">MZM1</name>
    <name type="ORF">BC1G_07907</name>
    <name type="ORF">BCIN_08g01520</name>
</gene>
<proteinExistence type="inferred from homology"/>
<name>MZM1_BOTFB</name>
<protein>
    <recommendedName>
        <fullName>Mitochondrial zinc maintenance protein 1, mitochondrial</fullName>
    </recommendedName>
</protein>
<sequence>MALAAYRHLLRATRVAFNEDITLLTSARKQARSTFLANRSLALESPESIAAIAHAEDVAQFLRRNVVQGQKVEGDEKYKLNIHEHTERGDNDTIKMPNGKNVTIDGKTCKD</sequence>
<evidence type="ECO:0000250" key="1"/>
<evidence type="ECO:0000255" key="2"/>
<evidence type="ECO:0000256" key="3">
    <source>
        <dbReference type="SAM" id="MobiDB-lite"/>
    </source>
</evidence>
<evidence type="ECO:0000305" key="4"/>
<keyword id="KW-0143">Chaperone</keyword>
<keyword id="KW-0496">Mitochondrion</keyword>
<keyword id="KW-1185">Reference proteome</keyword>
<keyword id="KW-0809">Transit peptide</keyword>
<reference key="1">
    <citation type="journal article" date="2011" name="PLoS Genet.">
        <title>Genomic analysis of the necrotrophic fungal pathogens Sclerotinia sclerotiorum and Botrytis cinerea.</title>
        <authorList>
            <person name="Amselem J."/>
            <person name="Cuomo C.A."/>
            <person name="van Kan J.A.L."/>
            <person name="Viaud M."/>
            <person name="Benito E.P."/>
            <person name="Couloux A."/>
            <person name="Coutinho P.M."/>
            <person name="de Vries R.P."/>
            <person name="Dyer P.S."/>
            <person name="Fillinger S."/>
            <person name="Fournier E."/>
            <person name="Gout L."/>
            <person name="Hahn M."/>
            <person name="Kohn L."/>
            <person name="Lapalu N."/>
            <person name="Plummer K.M."/>
            <person name="Pradier J.-M."/>
            <person name="Quevillon E."/>
            <person name="Sharon A."/>
            <person name="Simon A."/>
            <person name="ten Have A."/>
            <person name="Tudzynski B."/>
            <person name="Tudzynski P."/>
            <person name="Wincker P."/>
            <person name="Andrew M."/>
            <person name="Anthouard V."/>
            <person name="Beever R.E."/>
            <person name="Beffa R."/>
            <person name="Benoit I."/>
            <person name="Bouzid O."/>
            <person name="Brault B."/>
            <person name="Chen Z."/>
            <person name="Choquer M."/>
            <person name="Collemare J."/>
            <person name="Cotton P."/>
            <person name="Danchin E.G."/>
            <person name="Da Silva C."/>
            <person name="Gautier A."/>
            <person name="Giraud C."/>
            <person name="Giraud T."/>
            <person name="Gonzalez C."/>
            <person name="Grossetete S."/>
            <person name="Gueldener U."/>
            <person name="Henrissat B."/>
            <person name="Howlett B.J."/>
            <person name="Kodira C."/>
            <person name="Kretschmer M."/>
            <person name="Lappartient A."/>
            <person name="Leroch M."/>
            <person name="Levis C."/>
            <person name="Mauceli E."/>
            <person name="Neuveglise C."/>
            <person name="Oeser B."/>
            <person name="Pearson M."/>
            <person name="Poulain J."/>
            <person name="Poussereau N."/>
            <person name="Quesneville H."/>
            <person name="Rascle C."/>
            <person name="Schumacher J."/>
            <person name="Segurens B."/>
            <person name="Sexton A."/>
            <person name="Silva E."/>
            <person name="Sirven C."/>
            <person name="Soanes D.M."/>
            <person name="Talbot N.J."/>
            <person name="Templeton M."/>
            <person name="Yandava C."/>
            <person name="Yarden O."/>
            <person name="Zeng Q."/>
            <person name="Rollins J.A."/>
            <person name="Lebrun M.-H."/>
            <person name="Dickman M."/>
        </authorList>
    </citation>
    <scope>NUCLEOTIDE SEQUENCE [LARGE SCALE GENOMIC DNA]</scope>
    <source>
        <strain>B05.10</strain>
    </source>
</reference>
<reference key="2">
    <citation type="journal article" date="2012" name="Eukaryot. Cell">
        <title>Genome update of Botrytis cinerea strains B05.10 and T4.</title>
        <authorList>
            <person name="Staats M."/>
            <person name="van Kan J.A.L."/>
        </authorList>
    </citation>
    <scope>NUCLEOTIDE SEQUENCE [LARGE SCALE GENOMIC DNA]</scope>
    <scope>GENOME REANNOTATION</scope>
    <source>
        <strain>B05.10</strain>
    </source>
</reference>
<reference key="3">
    <citation type="journal article" date="2017" name="Mol. Plant Pathol.">
        <title>A gapless genome sequence of the fungus Botrytis cinerea.</title>
        <authorList>
            <person name="van Kan J.A.L."/>
            <person name="Stassen J.H.M."/>
            <person name="Mosbach A."/>
            <person name="van der Lee T.A.J."/>
            <person name="Faino L."/>
            <person name="Farmer A.D."/>
            <person name="Papasotiriou D.G."/>
            <person name="Zhou S."/>
            <person name="Seidl M.F."/>
            <person name="Cottam E."/>
            <person name="Edel D."/>
            <person name="Hahn M."/>
            <person name="Schwartz D.C."/>
            <person name="Dietrich R.A."/>
            <person name="Widdison S."/>
            <person name="Scalliet G."/>
        </authorList>
    </citation>
    <scope>NUCLEOTIDE SEQUENCE [LARGE SCALE GENOMIC DNA]</scope>
    <scope>GENOME REANNOTATION</scope>
    <source>
        <strain>B05.10</strain>
    </source>
</reference>